<feature type="chain" id="PRO_0000271814" description="Protein nucleotidyltransferase YdiU">
    <location>
        <begin position="1"/>
        <end position="521"/>
    </location>
</feature>
<feature type="active site" description="Proton acceptor" evidence="1">
    <location>
        <position position="270"/>
    </location>
</feature>
<feature type="binding site" evidence="1">
    <location>
        <position position="109"/>
    </location>
    <ligand>
        <name>ATP</name>
        <dbReference type="ChEBI" id="CHEBI:30616"/>
    </ligand>
</feature>
<feature type="binding site" evidence="1">
    <location>
        <position position="111"/>
    </location>
    <ligand>
        <name>ATP</name>
        <dbReference type="ChEBI" id="CHEBI:30616"/>
    </ligand>
</feature>
<feature type="binding site" evidence="1">
    <location>
        <position position="112"/>
    </location>
    <ligand>
        <name>ATP</name>
        <dbReference type="ChEBI" id="CHEBI:30616"/>
    </ligand>
</feature>
<feature type="binding site" evidence="1">
    <location>
        <position position="131"/>
    </location>
    <ligand>
        <name>ATP</name>
        <dbReference type="ChEBI" id="CHEBI:30616"/>
    </ligand>
</feature>
<feature type="binding site" evidence="1">
    <location>
        <position position="143"/>
    </location>
    <ligand>
        <name>ATP</name>
        <dbReference type="ChEBI" id="CHEBI:30616"/>
    </ligand>
</feature>
<feature type="binding site" evidence="1">
    <location>
        <position position="144"/>
    </location>
    <ligand>
        <name>ATP</name>
        <dbReference type="ChEBI" id="CHEBI:30616"/>
    </ligand>
</feature>
<feature type="binding site" evidence="1">
    <location>
        <position position="194"/>
    </location>
    <ligand>
        <name>ATP</name>
        <dbReference type="ChEBI" id="CHEBI:30616"/>
    </ligand>
</feature>
<feature type="binding site" evidence="1">
    <location>
        <position position="201"/>
    </location>
    <ligand>
        <name>ATP</name>
        <dbReference type="ChEBI" id="CHEBI:30616"/>
    </ligand>
</feature>
<feature type="binding site" evidence="1">
    <location>
        <position position="271"/>
    </location>
    <ligand>
        <name>Mg(2+)</name>
        <dbReference type="ChEBI" id="CHEBI:18420"/>
    </ligand>
</feature>
<feature type="binding site" evidence="1">
    <location>
        <position position="280"/>
    </location>
    <ligand>
        <name>ATP</name>
        <dbReference type="ChEBI" id="CHEBI:30616"/>
    </ligand>
</feature>
<feature type="binding site" evidence="1">
    <location>
        <position position="280"/>
    </location>
    <ligand>
        <name>Mg(2+)</name>
        <dbReference type="ChEBI" id="CHEBI:18420"/>
    </ligand>
</feature>
<keyword id="KW-0067">ATP-binding</keyword>
<keyword id="KW-0460">Magnesium</keyword>
<keyword id="KW-0464">Manganese</keyword>
<keyword id="KW-0479">Metal-binding</keyword>
<keyword id="KW-0547">Nucleotide-binding</keyword>
<keyword id="KW-0548">Nucleotidyltransferase</keyword>
<keyword id="KW-0808">Transferase</keyword>
<dbReference type="EC" id="2.7.7.-" evidence="1"/>
<dbReference type="EC" id="2.7.7.108" evidence="1"/>
<dbReference type="EMBL" id="CP000124">
    <property type="protein sequence ID" value="ABA50803.1"/>
    <property type="molecule type" value="Genomic_DNA"/>
</dbReference>
<dbReference type="RefSeq" id="WP_004538218.1">
    <property type="nucleotide sequence ID" value="NC_007434.1"/>
</dbReference>
<dbReference type="SMR" id="Q3JRF1"/>
<dbReference type="EnsemblBacteria" id="ABA50803">
    <property type="protein sequence ID" value="ABA50803"/>
    <property type="gene ID" value="BURPS1710b_2457"/>
</dbReference>
<dbReference type="KEGG" id="bpm:BURPS1710b_2457"/>
<dbReference type="HOGENOM" id="CLU_010245_4_0_4"/>
<dbReference type="Proteomes" id="UP000002700">
    <property type="component" value="Chromosome I"/>
</dbReference>
<dbReference type="GO" id="GO:0070733">
    <property type="term" value="F:AMPylase activity"/>
    <property type="evidence" value="ECO:0007669"/>
    <property type="project" value="RHEA"/>
</dbReference>
<dbReference type="GO" id="GO:0005524">
    <property type="term" value="F:ATP binding"/>
    <property type="evidence" value="ECO:0007669"/>
    <property type="project" value="UniProtKB-UniRule"/>
</dbReference>
<dbReference type="GO" id="GO:0000287">
    <property type="term" value="F:magnesium ion binding"/>
    <property type="evidence" value="ECO:0007669"/>
    <property type="project" value="UniProtKB-UniRule"/>
</dbReference>
<dbReference type="HAMAP" id="MF_00692">
    <property type="entry name" value="YdiU_SelO"/>
    <property type="match status" value="1"/>
</dbReference>
<dbReference type="InterPro" id="IPR003846">
    <property type="entry name" value="SelO"/>
</dbReference>
<dbReference type="NCBIfam" id="NF000658">
    <property type="entry name" value="PRK00029.1"/>
    <property type="match status" value="1"/>
</dbReference>
<dbReference type="PANTHER" id="PTHR32057">
    <property type="entry name" value="PROTEIN ADENYLYLTRANSFERASE SELO, MITOCHONDRIAL"/>
    <property type="match status" value="1"/>
</dbReference>
<dbReference type="PANTHER" id="PTHR32057:SF14">
    <property type="entry name" value="PROTEIN ADENYLYLTRANSFERASE SELO, MITOCHONDRIAL"/>
    <property type="match status" value="1"/>
</dbReference>
<dbReference type="Pfam" id="PF02696">
    <property type="entry name" value="SelO"/>
    <property type="match status" value="1"/>
</dbReference>
<name>SELO_BURP1</name>
<evidence type="ECO:0000255" key="1">
    <source>
        <dbReference type="HAMAP-Rule" id="MF_00692"/>
    </source>
</evidence>
<gene>
    <name evidence="1" type="primary">ydiU</name>
    <name evidence="1" type="synonym">selO</name>
    <name type="ordered locus">BURPS1710b_2457</name>
</gene>
<accession>Q3JRF1</accession>
<protein>
    <recommendedName>
        <fullName evidence="1">Protein nucleotidyltransferase YdiU</fullName>
        <ecNumber evidence="1">2.7.7.-</ecNumber>
    </recommendedName>
    <alternativeName>
        <fullName evidence="1">Protein adenylyltransferase YdiU</fullName>
        <ecNumber evidence="1">2.7.7.108</ecNumber>
    </alternativeName>
    <alternativeName>
        <fullName evidence="1">Protein uridylyltransferase YdiU</fullName>
        <ecNumber evidence="1">2.7.7.-</ecNumber>
    </alternativeName>
</protein>
<organism>
    <name type="scientific">Burkholderia pseudomallei (strain 1710b)</name>
    <dbReference type="NCBI Taxonomy" id="320372"/>
    <lineage>
        <taxon>Bacteria</taxon>
        <taxon>Pseudomonadati</taxon>
        <taxon>Pseudomonadota</taxon>
        <taxon>Betaproteobacteria</taxon>
        <taxon>Burkholderiales</taxon>
        <taxon>Burkholderiaceae</taxon>
        <taxon>Burkholderia</taxon>
        <taxon>pseudomallei group</taxon>
    </lineage>
</organism>
<sequence>MSFSRSEAAPAAPLPDLAATLAAPRDDAFQQLGAAFVTRLPAAPLPAPYVVGFSDDAARMLGLEPALRDAPGFAELFCGNPTRDWPQASLPYASVYSGHQFGVWAGQLGDGRALTIGELAHDGRRYELQLKGAGRTPYSRMGDGRAVLRSSIREFLCSEAMHHLGIPTTRALAVIGSDQPVVREEIETSAVVTRVAQSFVRFGHFEHFFANDRPEQLRALADHVIERFYPACRDADDPYLALLAEATRRTAELVAQWQAVGFCHGVMNTDNMSILGLTIDYGPFGFIDAFDAKHVCNHSDTQGRYAYRMQPRIAHWNCFCLAQALLPLIGLHRDAPSEDARAERAVEDAHAVLGRFPEQFGPALERAMRAKLGLALEREGDAALANQLLEIMDASHADFTLTFRHLARVSKHDARGDAPVRDLFIDRDAFDRWANLYRARLSEEARDDASRAAAMNRVNPKYVLRNHLAETAIRRAKEKDFSEVERLAAVLRRPFDEQPEHDAYAALPPDWASTLEVSCSS</sequence>
<reference key="1">
    <citation type="journal article" date="2010" name="Genome Biol. Evol.">
        <title>Continuing evolution of Burkholderia mallei through genome reduction and large-scale rearrangements.</title>
        <authorList>
            <person name="Losada L."/>
            <person name="Ronning C.M."/>
            <person name="DeShazer D."/>
            <person name="Woods D."/>
            <person name="Fedorova N."/>
            <person name="Kim H.S."/>
            <person name="Shabalina S.A."/>
            <person name="Pearson T.R."/>
            <person name="Brinkac L."/>
            <person name="Tan P."/>
            <person name="Nandi T."/>
            <person name="Crabtree J."/>
            <person name="Badger J."/>
            <person name="Beckstrom-Sternberg S."/>
            <person name="Saqib M."/>
            <person name="Schutzer S.E."/>
            <person name="Keim P."/>
            <person name="Nierman W.C."/>
        </authorList>
    </citation>
    <scope>NUCLEOTIDE SEQUENCE [LARGE SCALE GENOMIC DNA]</scope>
    <source>
        <strain>1710b</strain>
    </source>
</reference>
<comment type="function">
    <text evidence="1">Nucleotidyltransferase involved in the post-translational modification of proteins. It can catalyze the addition of adenosine monophosphate (AMP) or uridine monophosphate (UMP) to a protein, resulting in modifications known as AMPylation and UMPylation.</text>
</comment>
<comment type="catalytic activity">
    <reaction evidence="1">
        <text>L-seryl-[protein] + ATP = 3-O-(5'-adenylyl)-L-seryl-[protein] + diphosphate</text>
        <dbReference type="Rhea" id="RHEA:58120"/>
        <dbReference type="Rhea" id="RHEA-COMP:9863"/>
        <dbReference type="Rhea" id="RHEA-COMP:15073"/>
        <dbReference type="ChEBI" id="CHEBI:29999"/>
        <dbReference type="ChEBI" id="CHEBI:30616"/>
        <dbReference type="ChEBI" id="CHEBI:33019"/>
        <dbReference type="ChEBI" id="CHEBI:142516"/>
        <dbReference type="EC" id="2.7.7.108"/>
    </reaction>
</comment>
<comment type="catalytic activity">
    <reaction evidence="1">
        <text>L-threonyl-[protein] + ATP = 3-O-(5'-adenylyl)-L-threonyl-[protein] + diphosphate</text>
        <dbReference type="Rhea" id="RHEA:54292"/>
        <dbReference type="Rhea" id="RHEA-COMP:11060"/>
        <dbReference type="Rhea" id="RHEA-COMP:13847"/>
        <dbReference type="ChEBI" id="CHEBI:30013"/>
        <dbReference type="ChEBI" id="CHEBI:30616"/>
        <dbReference type="ChEBI" id="CHEBI:33019"/>
        <dbReference type="ChEBI" id="CHEBI:138113"/>
        <dbReference type="EC" id="2.7.7.108"/>
    </reaction>
</comment>
<comment type="catalytic activity">
    <reaction evidence="1">
        <text>L-tyrosyl-[protein] + ATP = O-(5'-adenylyl)-L-tyrosyl-[protein] + diphosphate</text>
        <dbReference type="Rhea" id="RHEA:54288"/>
        <dbReference type="Rhea" id="RHEA-COMP:10136"/>
        <dbReference type="Rhea" id="RHEA-COMP:13846"/>
        <dbReference type="ChEBI" id="CHEBI:30616"/>
        <dbReference type="ChEBI" id="CHEBI:33019"/>
        <dbReference type="ChEBI" id="CHEBI:46858"/>
        <dbReference type="ChEBI" id="CHEBI:83624"/>
        <dbReference type="EC" id="2.7.7.108"/>
    </reaction>
</comment>
<comment type="catalytic activity">
    <reaction evidence="1">
        <text>L-histidyl-[protein] + UTP = N(tele)-(5'-uridylyl)-L-histidyl-[protein] + diphosphate</text>
        <dbReference type="Rhea" id="RHEA:83891"/>
        <dbReference type="Rhea" id="RHEA-COMP:9745"/>
        <dbReference type="Rhea" id="RHEA-COMP:20239"/>
        <dbReference type="ChEBI" id="CHEBI:29979"/>
        <dbReference type="ChEBI" id="CHEBI:33019"/>
        <dbReference type="ChEBI" id="CHEBI:46398"/>
        <dbReference type="ChEBI" id="CHEBI:233474"/>
    </reaction>
</comment>
<comment type="catalytic activity">
    <reaction evidence="1">
        <text>L-seryl-[protein] + UTP = O-(5'-uridylyl)-L-seryl-[protein] + diphosphate</text>
        <dbReference type="Rhea" id="RHEA:64604"/>
        <dbReference type="Rhea" id="RHEA-COMP:9863"/>
        <dbReference type="Rhea" id="RHEA-COMP:16635"/>
        <dbReference type="ChEBI" id="CHEBI:29999"/>
        <dbReference type="ChEBI" id="CHEBI:33019"/>
        <dbReference type="ChEBI" id="CHEBI:46398"/>
        <dbReference type="ChEBI" id="CHEBI:156051"/>
    </reaction>
</comment>
<comment type="catalytic activity">
    <reaction evidence="1">
        <text>L-tyrosyl-[protein] + UTP = O-(5'-uridylyl)-L-tyrosyl-[protein] + diphosphate</text>
        <dbReference type="Rhea" id="RHEA:83887"/>
        <dbReference type="Rhea" id="RHEA-COMP:10136"/>
        <dbReference type="Rhea" id="RHEA-COMP:20238"/>
        <dbReference type="ChEBI" id="CHEBI:33019"/>
        <dbReference type="ChEBI" id="CHEBI:46398"/>
        <dbReference type="ChEBI" id="CHEBI:46858"/>
        <dbReference type="ChEBI" id="CHEBI:90602"/>
    </reaction>
</comment>
<comment type="cofactor">
    <cofactor evidence="1">
        <name>Mg(2+)</name>
        <dbReference type="ChEBI" id="CHEBI:18420"/>
    </cofactor>
    <cofactor evidence="1">
        <name>Mn(2+)</name>
        <dbReference type="ChEBI" id="CHEBI:29035"/>
    </cofactor>
</comment>
<comment type="similarity">
    <text evidence="1">Belongs to the SELO family.</text>
</comment>
<proteinExistence type="inferred from homology"/>